<accession>B3DWG6</accession>
<reference key="1">
    <citation type="journal article" date="2008" name="Biol. Direct">
        <title>Complete genome sequence of the extremely acidophilic methanotroph isolate V4, Methylacidiphilum infernorum, a representative of the bacterial phylum Verrucomicrobia.</title>
        <authorList>
            <person name="Hou S."/>
            <person name="Makarova K.S."/>
            <person name="Saw J.H."/>
            <person name="Senin P."/>
            <person name="Ly B.V."/>
            <person name="Zhou Z."/>
            <person name="Ren Y."/>
            <person name="Wang J."/>
            <person name="Galperin M.Y."/>
            <person name="Omelchenko M.V."/>
            <person name="Wolf Y.I."/>
            <person name="Yutin N."/>
            <person name="Koonin E.V."/>
            <person name="Stott M.B."/>
            <person name="Mountain B.W."/>
            <person name="Crowe M.A."/>
            <person name="Smirnova A.V."/>
            <person name="Dunfield P.F."/>
            <person name="Feng L."/>
            <person name="Wang L."/>
            <person name="Alam M."/>
        </authorList>
    </citation>
    <scope>NUCLEOTIDE SEQUENCE [LARGE SCALE GENOMIC DNA]</scope>
    <source>
        <strain>Isolate V4</strain>
    </source>
</reference>
<dbReference type="EMBL" id="CP000975">
    <property type="protein sequence ID" value="ACD82061.1"/>
    <property type="molecule type" value="Genomic_DNA"/>
</dbReference>
<dbReference type="RefSeq" id="WP_012462343.1">
    <property type="nucleotide sequence ID" value="NC_010794.1"/>
</dbReference>
<dbReference type="SMR" id="B3DWG6"/>
<dbReference type="STRING" id="481448.Minf_0001"/>
<dbReference type="KEGG" id="min:Minf_0001"/>
<dbReference type="eggNOG" id="COG0593">
    <property type="taxonomic scope" value="Bacteria"/>
</dbReference>
<dbReference type="HOGENOM" id="CLU_026910_3_1_0"/>
<dbReference type="OrthoDB" id="9807019at2"/>
<dbReference type="Proteomes" id="UP000009149">
    <property type="component" value="Chromosome"/>
</dbReference>
<dbReference type="GO" id="GO:0005737">
    <property type="term" value="C:cytoplasm"/>
    <property type="evidence" value="ECO:0007669"/>
    <property type="project" value="UniProtKB-SubCell"/>
</dbReference>
<dbReference type="GO" id="GO:0005886">
    <property type="term" value="C:plasma membrane"/>
    <property type="evidence" value="ECO:0007669"/>
    <property type="project" value="TreeGrafter"/>
</dbReference>
<dbReference type="GO" id="GO:0005524">
    <property type="term" value="F:ATP binding"/>
    <property type="evidence" value="ECO:0007669"/>
    <property type="project" value="UniProtKB-UniRule"/>
</dbReference>
<dbReference type="GO" id="GO:0016887">
    <property type="term" value="F:ATP hydrolysis activity"/>
    <property type="evidence" value="ECO:0007669"/>
    <property type="project" value="InterPro"/>
</dbReference>
<dbReference type="GO" id="GO:0003688">
    <property type="term" value="F:DNA replication origin binding"/>
    <property type="evidence" value="ECO:0007669"/>
    <property type="project" value="UniProtKB-UniRule"/>
</dbReference>
<dbReference type="GO" id="GO:0008289">
    <property type="term" value="F:lipid binding"/>
    <property type="evidence" value="ECO:0007669"/>
    <property type="project" value="UniProtKB-KW"/>
</dbReference>
<dbReference type="GO" id="GO:0006270">
    <property type="term" value="P:DNA replication initiation"/>
    <property type="evidence" value="ECO:0007669"/>
    <property type="project" value="UniProtKB-UniRule"/>
</dbReference>
<dbReference type="GO" id="GO:0006275">
    <property type="term" value="P:regulation of DNA replication"/>
    <property type="evidence" value="ECO:0007669"/>
    <property type="project" value="UniProtKB-UniRule"/>
</dbReference>
<dbReference type="CDD" id="cd00009">
    <property type="entry name" value="AAA"/>
    <property type="match status" value="1"/>
</dbReference>
<dbReference type="CDD" id="cd06571">
    <property type="entry name" value="Bac_DnaA_C"/>
    <property type="match status" value="1"/>
</dbReference>
<dbReference type="FunFam" id="3.40.50.300:FF:000668">
    <property type="entry name" value="Chromosomal replication initiator protein DnaA"/>
    <property type="match status" value="1"/>
</dbReference>
<dbReference type="Gene3D" id="1.10.1750.10">
    <property type="match status" value="1"/>
</dbReference>
<dbReference type="Gene3D" id="1.10.8.60">
    <property type="match status" value="1"/>
</dbReference>
<dbReference type="Gene3D" id="3.30.300.180">
    <property type="match status" value="1"/>
</dbReference>
<dbReference type="Gene3D" id="3.40.50.300">
    <property type="entry name" value="P-loop containing nucleotide triphosphate hydrolases"/>
    <property type="match status" value="1"/>
</dbReference>
<dbReference type="HAMAP" id="MF_00377">
    <property type="entry name" value="DnaA_bact"/>
    <property type="match status" value="1"/>
</dbReference>
<dbReference type="InterPro" id="IPR003593">
    <property type="entry name" value="AAA+_ATPase"/>
</dbReference>
<dbReference type="InterPro" id="IPR001957">
    <property type="entry name" value="Chromosome_initiator_DnaA"/>
</dbReference>
<dbReference type="InterPro" id="IPR020591">
    <property type="entry name" value="Chromosome_initiator_DnaA-like"/>
</dbReference>
<dbReference type="InterPro" id="IPR013159">
    <property type="entry name" value="DnaA_C"/>
</dbReference>
<dbReference type="InterPro" id="IPR013317">
    <property type="entry name" value="DnaA_dom"/>
</dbReference>
<dbReference type="InterPro" id="IPR024633">
    <property type="entry name" value="DnaA_N_dom"/>
</dbReference>
<dbReference type="InterPro" id="IPR038454">
    <property type="entry name" value="DnaA_N_sf"/>
</dbReference>
<dbReference type="InterPro" id="IPR027417">
    <property type="entry name" value="P-loop_NTPase"/>
</dbReference>
<dbReference type="InterPro" id="IPR010921">
    <property type="entry name" value="Trp_repressor/repl_initiator"/>
</dbReference>
<dbReference type="NCBIfam" id="TIGR00362">
    <property type="entry name" value="DnaA"/>
    <property type="match status" value="1"/>
</dbReference>
<dbReference type="PANTHER" id="PTHR30050">
    <property type="entry name" value="CHROMOSOMAL REPLICATION INITIATOR PROTEIN DNAA"/>
    <property type="match status" value="1"/>
</dbReference>
<dbReference type="PANTHER" id="PTHR30050:SF2">
    <property type="entry name" value="CHROMOSOMAL REPLICATION INITIATOR PROTEIN DNAA"/>
    <property type="match status" value="1"/>
</dbReference>
<dbReference type="Pfam" id="PF00308">
    <property type="entry name" value="Bac_DnaA"/>
    <property type="match status" value="1"/>
</dbReference>
<dbReference type="Pfam" id="PF08299">
    <property type="entry name" value="Bac_DnaA_C"/>
    <property type="match status" value="1"/>
</dbReference>
<dbReference type="Pfam" id="PF11638">
    <property type="entry name" value="DnaA_N"/>
    <property type="match status" value="1"/>
</dbReference>
<dbReference type="PRINTS" id="PR00051">
    <property type="entry name" value="DNAA"/>
</dbReference>
<dbReference type="SMART" id="SM00382">
    <property type="entry name" value="AAA"/>
    <property type="match status" value="1"/>
</dbReference>
<dbReference type="SMART" id="SM00760">
    <property type="entry name" value="Bac_DnaA_C"/>
    <property type="match status" value="1"/>
</dbReference>
<dbReference type="SUPFAM" id="SSF52540">
    <property type="entry name" value="P-loop containing nucleoside triphosphate hydrolases"/>
    <property type="match status" value="1"/>
</dbReference>
<dbReference type="SUPFAM" id="SSF48295">
    <property type="entry name" value="TrpR-like"/>
    <property type="match status" value="1"/>
</dbReference>
<organism>
    <name type="scientific">Methylacidiphilum infernorum (isolate V4)</name>
    <name type="common">Methylokorus infernorum (strain V4)</name>
    <dbReference type="NCBI Taxonomy" id="481448"/>
    <lineage>
        <taxon>Bacteria</taxon>
        <taxon>Pseudomonadati</taxon>
        <taxon>Verrucomicrobiota</taxon>
        <taxon>Methylacidiphilae</taxon>
        <taxon>Methylacidiphilales</taxon>
        <taxon>Methylacidiphilaceae</taxon>
        <taxon>Methylacidiphilum (ex Ratnadevi et al. 2023)</taxon>
    </lineage>
</organism>
<sequence length="454" mass="51540">MNKLKTDLNLIWNDICLELQKVISKEAIEKWFVPIELLSIENDQLLLKAPDPIYQYWIEENYLSQLIGASFRILAKNPKIIFAQESPGNGEKATGKKIKSLPREDKSSIFESKGLNTKFSFENFVVGPNSEFAAAAAKAVAESPAKAYNPLFLYGKVGLGKTHLMQAIGNHIVEKNKWILVQYVTSEQFTNEFIEAIQKGSIGQFRKKYRQIDVLLIDDIQFLAGKERSQEEFFHTFNCLFDGSKQIVLSGDEAPSSLQNLEKRLISRFEWGLTAEILPPGIEVRLAILKHKLKNYSLSIDEKILEFIAERIKTNVRQLEGALNRLCAYASIHKEGKITLEETQSLLKDLISLQPSKTITIEMIQKRVCEAYDIRFSDMVSKRRISAIALPRMVAMYLARRLTNLSLSQIGENFGGRDHGTVLHAQRTISEKMSKDPDLAQLIKKITEQLTSSQ</sequence>
<feature type="chain" id="PRO_1000189802" description="Chromosomal replication initiator protein DnaA">
    <location>
        <begin position="1"/>
        <end position="454"/>
    </location>
</feature>
<feature type="region of interest" description="Domain I, interacts with DnaA modulators" evidence="1">
    <location>
        <begin position="1"/>
        <end position="76"/>
    </location>
</feature>
<feature type="region of interest" description="Domain II" evidence="1">
    <location>
        <begin position="76"/>
        <end position="113"/>
    </location>
</feature>
<feature type="region of interest" description="Domain III, AAA+ region" evidence="1">
    <location>
        <begin position="114"/>
        <end position="330"/>
    </location>
</feature>
<feature type="region of interest" description="Domain IV, binds dsDNA" evidence="1">
    <location>
        <begin position="331"/>
        <end position="454"/>
    </location>
</feature>
<feature type="binding site" evidence="1">
    <location>
        <position position="158"/>
    </location>
    <ligand>
        <name>ATP</name>
        <dbReference type="ChEBI" id="CHEBI:30616"/>
    </ligand>
</feature>
<feature type="binding site" evidence="1">
    <location>
        <position position="160"/>
    </location>
    <ligand>
        <name>ATP</name>
        <dbReference type="ChEBI" id="CHEBI:30616"/>
    </ligand>
</feature>
<feature type="binding site" evidence="1">
    <location>
        <position position="161"/>
    </location>
    <ligand>
        <name>ATP</name>
        <dbReference type="ChEBI" id="CHEBI:30616"/>
    </ligand>
</feature>
<feature type="binding site" evidence="1">
    <location>
        <position position="162"/>
    </location>
    <ligand>
        <name>ATP</name>
        <dbReference type="ChEBI" id="CHEBI:30616"/>
    </ligand>
</feature>
<evidence type="ECO:0000255" key="1">
    <source>
        <dbReference type="HAMAP-Rule" id="MF_00377"/>
    </source>
</evidence>
<keyword id="KW-0067">ATP-binding</keyword>
<keyword id="KW-0963">Cytoplasm</keyword>
<keyword id="KW-0235">DNA replication</keyword>
<keyword id="KW-0238">DNA-binding</keyword>
<keyword id="KW-0446">Lipid-binding</keyword>
<keyword id="KW-0547">Nucleotide-binding</keyword>
<comment type="function">
    <text evidence="1">Plays an essential role in the initiation and regulation of chromosomal replication. ATP-DnaA binds to the origin of replication (oriC) to initiate formation of the DNA replication initiation complex once per cell cycle. Binds the DnaA box (a 9 base pair repeat at the origin) and separates the double-stranded (ds)DNA. Forms a right-handed helical filament on oriC DNA; dsDNA binds to the exterior of the filament while single-stranded (ss)DNA is stabiized in the filament's interior. The ATP-DnaA-oriC complex binds and stabilizes one strand of the AT-rich DNA unwinding element (DUE), permitting loading of DNA polymerase. After initiation quickly degrades to an ADP-DnaA complex that is not apt for DNA replication. Binds acidic phospholipids.</text>
</comment>
<comment type="subunit">
    <text evidence="1">Oligomerizes as a right-handed, spiral filament on DNA at oriC.</text>
</comment>
<comment type="subcellular location">
    <subcellularLocation>
        <location evidence="1">Cytoplasm</location>
    </subcellularLocation>
</comment>
<comment type="domain">
    <text evidence="1">Domain I is involved in oligomerization and binding regulators, domain II is flexibile and of varying length in different bacteria, domain III forms the AAA+ region, while domain IV binds dsDNA.</text>
</comment>
<comment type="similarity">
    <text evidence="1">Belongs to the DnaA family.</text>
</comment>
<proteinExistence type="inferred from homology"/>
<gene>
    <name evidence="1" type="primary">dnaA</name>
    <name type="ordered locus">Minf_0001</name>
</gene>
<protein>
    <recommendedName>
        <fullName evidence="1">Chromosomal replication initiator protein DnaA</fullName>
    </recommendedName>
</protein>
<name>DNAA_METI4</name>